<dbReference type="EMBL" id="L10328">
    <property type="protein sequence ID" value="AAA62108.1"/>
    <property type="status" value="ALT_FRAME"/>
    <property type="molecule type" value="Genomic_DNA"/>
</dbReference>
<dbReference type="EMBL" id="U00096">
    <property type="protein sequence ID" value="AAT48205.1"/>
    <property type="molecule type" value="Genomic_DNA"/>
</dbReference>
<dbReference type="EMBL" id="AP009048">
    <property type="protein sequence ID" value="BAE77533.1"/>
    <property type="molecule type" value="Genomic_DNA"/>
</dbReference>
<dbReference type="RefSeq" id="WP_001131164.1">
    <property type="nucleotide sequence ID" value="NZ_SSZK01000036.1"/>
</dbReference>
<dbReference type="RefSeq" id="YP_026245.1">
    <property type="nucleotide sequence ID" value="NC_000913.3"/>
</dbReference>
<dbReference type="SMR" id="P31475"/>
<dbReference type="BioGRID" id="4262602">
    <property type="interactions" value="112"/>
</dbReference>
<dbReference type="FunCoup" id="P31475">
    <property type="interactions" value="6"/>
</dbReference>
<dbReference type="STRING" id="511145.b3755"/>
<dbReference type="jPOST" id="P31475"/>
<dbReference type="PaxDb" id="511145-b3755"/>
<dbReference type="EnsemblBacteria" id="AAT48205">
    <property type="protein sequence ID" value="AAT48205"/>
    <property type="gene ID" value="b3755"/>
</dbReference>
<dbReference type="GeneID" id="948263"/>
<dbReference type="KEGG" id="ecj:JW5608"/>
<dbReference type="KEGG" id="eco:b3755"/>
<dbReference type="KEGG" id="ecoc:C3026_20355"/>
<dbReference type="PATRIC" id="fig|1411691.4.peg.2945"/>
<dbReference type="EchoBASE" id="EB1684"/>
<dbReference type="eggNOG" id="COG2186">
    <property type="taxonomic scope" value="Bacteria"/>
</dbReference>
<dbReference type="HOGENOM" id="CLU_017584_9_4_6"/>
<dbReference type="InParanoid" id="P31475"/>
<dbReference type="OMA" id="WMTRENF"/>
<dbReference type="OrthoDB" id="9028214at2"/>
<dbReference type="PhylomeDB" id="P31475"/>
<dbReference type="BioCyc" id="EcoCyc:EG11733-MONOMER"/>
<dbReference type="PRO" id="PR:P31475"/>
<dbReference type="Proteomes" id="UP000000625">
    <property type="component" value="Chromosome"/>
</dbReference>
<dbReference type="GO" id="GO:0005829">
    <property type="term" value="C:cytosol"/>
    <property type="evidence" value="ECO:0000314"/>
    <property type="project" value="EcoCyc"/>
</dbReference>
<dbReference type="GO" id="GO:0003677">
    <property type="term" value="F:DNA binding"/>
    <property type="evidence" value="ECO:0007669"/>
    <property type="project" value="UniProtKB-KW"/>
</dbReference>
<dbReference type="GO" id="GO:0003700">
    <property type="term" value="F:DNA-binding transcription factor activity"/>
    <property type="evidence" value="ECO:0007669"/>
    <property type="project" value="InterPro"/>
</dbReference>
<dbReference type="CDD" id="cd07377">
    <property type="entry name" value="WHTH_GntR"/>
    <property type="match status" value="1"/>
</dbReference>
<dbReference type="FunFam" id="1.10.10.10:FF:000251">
    <property type="entry name" value="Transcriptional regulator, GntR family"/>
    <property type="match status" value="1"/>
</dbReference>
<dbReference type="Gene3D" id="1.20.120.530">
    <property type="entry name" value="GntR ligand-binding domain-like"/>
    <property type="match status" value="1"/>
</dbReference>
<dbReference type="Gene3D" id="1.10.10.10">
    <property type="entry name" value="Winged helix-like DNA-binding domain superfamily/Winged helix DNA-binding domain"/>
    <property type="match status" value="1"/>
</dbReference>
<dbReference type="InterPro" id="IPR011711">
    <property type="entry name" value="GntR_C"/>
</dbReference>
<dbReference type="InterPro" id="IPR008920">
    <property type="entry name" value="TF_FadR/GntR_C"/>
</dbReference>
<dbReference type="InterPro" id="IPR000524">
    <property type="entry name" value="Tscrpt_reg_HTH_GntR"/>
</dbReference>
<dbReference type="InterPro" id="IPR036388">
    <property type="entry name" value="WH-like_DNA-bd_sf"/>
</dbReference>
<dbReference type="InterPro" id="IPR036390">
    <property type="entry name" value="WH_DNA-bd_sf"/>
</dbReference>
<dbReference type="PANTHER" id="PTHR43537:SF44">
    <property type="entry name" value="GNTR FAMILY REGULATORY PROTEIN"/>
    <property type="match status" value="1"/>
</dbReference>
<dbReference type="PANTHER" id="PTHR43537">
    <property type="entry name" value="TRANSCRIPTIONAL REGULATOR, GNTR FAMILY"/>
    <property type="match status" value="1"/>
</dbReference>
<dbReference type="Pfam" id="PF07729">
    <property type="entry name" value="FCD"/>
    <property type="match status" value="1"/>
</dbReference>
<dbReference type="Pfam" id="PF00392">
    <property type="entry name" value="GntR"/>
    <property type="match status" value="1"/>
</dbReference>
<dbReference type="PRINTS" id="PR00035">
    <property type="entry name" value="HTHGNTR"/>
</dbReference>
<dbReference type="SMART" id="SM00895">
    <property type="entry name" value="FCD"/>
    <property type="match status" value="1"/>
</dbReference>
<dbReference type="SMART" id="SM00345">
    <property type="entry name" value="HTH_GNTR"/>
    <property type="match status" value="1"/>
</dbReference>
<dbReference type="SUPFAM" id="SSF48008">
    <property type="entry name" value="GntR ligand-binding domain-like"/>
    <property type="match status" value="1"/>
</dbReference>
<dbReference type="SUPFAM" id="SSF46785">
    <property type="entry name" value="Winged helix' DNA-binding domain"/>
    <property type="match status" value="1"/>
</dbReference>
<dbReference type="PROSITE" id="PS50949">
    <property type="entry name" value="HTH_GNTR"/>
    <property type="match status" value="1"/>
</dbReference>
<accession>P31475</accession>
<accession>Q2M873</accession>
<accession>Q6BF09</accession>
<reference key="1">
    <citation type="journal article" date="1993" name="Genomics">
        <title>DNA sequence and analysis of 136 kilobases of the Escherichia coli genome: organizational symmetry around the origin of replication.</title>
        <authorList>
            <person name="Burland V.D."/>
            <person name="Plunkett G. III"/>
            <person name="Daniels D.L."/>
            <person name="Blattner F.R."/>
        </authorList>
    </citation>
    <scope>NUCLEOTIDE SEQUENCE [LARGE SCALE GENOMIC DNA]</scope>
    <source>
        <strain>K12 / MG1655 / ATCC 47076</strain>
    </source>
</reference>
<reference key="2">
    <citation type="journal article" date="1997" name="Science">
        <title>The complete genome sequence of Escherichia coli K-12.</title>
        <authorList>
            <person name="Blattner F.R."/>
            <person name="Plunkett G. III"/>
            <person name="Bloch C.A."/>
            <person name="Perna N.T."/>
            <person name="Burland V."/>
            <person name="Riley M."/>
            <person name="Collado-Vides J."/>
            <person name="Glasner J.D."/>
            <person name="Rode C.K."/>
            <person name="Mayhew G.F."/>
            <person name="Gregor J."/>
            <person name="Davis N.W."/>
            <person name="Kirkpatrick H.A."/>
            <person name="Goeden M.A."/>
            <person name="Rose D.J."/>
            <person name="Mau B."/>
            <person name="Shao Y."/>
        </authorList>
    </citation>
    <scope>NUCLEOTIDE SEQUENCE [LARGE SCALE GENOMIC DNA]</scope>
    <scope>SEQUENCE REVISION TO N-TERMINUS</scope>
    <source>
        <strain>K12 / MG1655 / ATCC 47076</strain>
    </source>
</reference>
<reference key="3">
    <citation type="journal article" date="2006" name="Nucleic Acids Res.">
        <title>Escherichia coli K-12: a cooperatively developed annotation snapshot -- 2005.</title>
        <authorList>
            <person name="Riley M."/>
            <person name="Abe T."/>
            <person name="Arnaud M.B."/>
            <person name="Berlyn M.K.B."/>
            <person name="Blattner F.R."/>
            <person name="Chaudhuri R.R."/>
            <person name="Glasner J.D."/>
            <person name="Horiuchi T."/>
            <person name="Keseler I.M."/>
            <person name="Kosuge T."/>
            <person name="Mori H."/>
            <person name="Perna N.T."/>
            <person name="Plunkett G. III"/>
            <person name="Rudd K.E."/>
            <person name="Serres M.H."/>
            <person name="Thomas G.H."/>
            <person name="Thomson N.R."/>
            <person name="Wishart D."/>
            <person name="Wanner B.L."/>
        </authorList>
    </citation>
    <scope>SEQUENCE REVISION TO 123</scope>
</reference>
<reference key="4">
    <citation type="journal article" date="2006" name="Mol. Syst. Biol.">
        <title>Highly accurate genome sequences of Escherichia coli K-12 strains MG1655 and W3110.</title>
        <authorList>
            <person name="Hayashi K."/>
            <person name="Morooka N."/>
            <person name="Yamamoto Y."/>
            <person name="Fujita K."/>
            <person name="Isono K."/>
            <person name="Choi S."/>
            <person name="Ohtsubo E."/>
            <person name="Baba T."/>
            <person name="Wanner B.L."/>
            <person name="Mori H."/>
            <person name="Horiuchi T."/>
        </authorList>
    </citation>
    <scope>NUCLEOTIDE SEQUENCE [LARGE SCALE GENOMIC DNA]</scope>
    <source>
        <strain>K12 / W3110 / ATCC 27325 / DSM 5911</strain>
    </source>
</reference>
<sequence length="230" mass="26076">MPLSAQQLAAQKNLSYVLAEKLAQRILKGEYEPGTILPGEIELGEQFGVSRTAVREAVKTLTAKGMVLPRPRIGTRVMPQSNWNFLDQELLTWWMTEENFHQVIDHFLVMRICLEPQACLLAATVGTAEQKAHLNTLMAEMAALKENFRRERWIEVDMAWHEHIYEMSANPFLTSFASLFHSVYHTYFTSITSDTVIKLDLHQAIVDAIIQSDGDAAFKACQALLRSPDK</sequence>
<comment type="sequence caution" evidence="2">
    <conflict type="frameshift">
        <sequence resource="EMBL-CDS" id="AAA62108"/>
    </conflict>
</comment>
<evidence type="ECO:0000255" key="1">
    <source>
        <dbReference type="PROSITE-ProRule" id="PRU00307"/>
    </source>
</evidence>
<evidence type="ECO:0000305" key="2"/>
<name>YIEP_ECOLI</name>
<protein>
    <recommendedName>
        <fullName>Uncharacterized HTH-type transcriptional regulator YieP</fullName>
    </recommendedName>
</protein>
<gene>
    <name type="primary">yieP</name>
    <name type="ordered locus">b3755</name>
    <name type="ordered locus">JW5608</name>
</gene>
<proteinExistence type="predicted"/>
<keyword id="KW-0238">DNA-binding</keyword>
<keyword id="KW-1185">Reference proteome</keyword>
<keyword id="KW-0804">Transcription</keyword>
<keyword id="KW-0805">Transcription regulation</keyword>
<organism>
    <name type="scientific">Escherichia coli (strain K12)</name>
    <dbReference type="NCBI Taxonomy" id="83333"/>
    <lineage>
        <taxon>Bacteria</taxon>
        <taxon>Pseudomonadati</taxon>
        <taxon>Pseudomonadota</taxon>
        <taxon>Gammaproteobacteria</taxon>
        <taxon>Enterobacterales</taxon>
        <taxon>Enterobacteriaceae</taxon>
        <taxon>Escherichia</taxon>
    </lineage>
</organism>
<feature type="chain" id="PRO_0000050682" description="Uncharacterized HTH-type transcriptional regulator YieP">
    <location>
        <begin position="1"/>
        <end position="230"/>
    </location>
</feature>
<feature type="domain" description="HTH gntR-type" evidence="1">
    <location>
        <begin position="12"/>
        <end position="80"/>
    </location>
</feature>
<feature type="DNA-binding region" description="H-T-H motif" evidence="1">
    <location>
        <begin position="40"/>
        <end position="59"/>
    </location>
</feature>
<feature type="sequence conflict" description="In Ref. 1; AAA62108." evidence="2" ref="1">
    <location>
        <position position="123"/>
    </location>
</feature>